<evidence type="ECO:0000255" key="1">
    <source>
        <dbReference type="HAMAP-Rule" id="MF_00658"/>
    </source>
</evidence>
<sequence length="159" mass="17870">MNIKIIGVGKLKEKYFRDGIAEYLKRMDKFAKVKIVEVADEKAPENLSEAEMADVKAKEGDRILGKIKDKEWVIALAIEGKQRPSEVFAKEIADLGTYGYSDITFVIGGSLGLSPAVMKRANDTLSFGKLTMPHQLMRLVLMEQIYRAFMINIGSPYHK</sequence>
<feature type="chain" id="PRO_0000366613" description="Ribosomal RNA large subunit methyltransferase H">
    <location>
        <begin position="1"/>
        <end position="159"/>
    </location>
</feature>
<feature type="binding site" evidence="1">
    <location>
        <position position="76"/>
    </location>
    <ligand>
        <name>S-adenosyl-L-methionine</name>
        <dbReference type="ChEBI" id="CHEBI:59789"/>
    </ligand>
</feature>
<feature type="binding site" evidence="1">
    <location>
        <position position="108"/>
    </location>
    <ligand>
        <name>S-adenosyl-L-methionine</name>
        <dbReference type="ChEBI" id="CHEBI:59789"/>
    </ligand>
</feature>
<feature type="binding site" evidence="1">
    <location>
        <begin position="127"/>
        <end position="132"/>
    </location>
    <ligand>
        <name>S-adenosyl-L-methionine</name>
        <dbReference type="ChEBI" id="CHEBI:59789"/>
    </ligand>
</feature>
<dbReference type="EC" id="2.1.1.177" evidence="1"/>
<dbReference type="EMBL" id="FM177140">
    <property type="protein sequence ID" value="CAQ68049.1"/>
    <property type="molecule type" value="Genomic_DNA"/>
</dbReference>
<dbReference type="SMR" id="B3WBI0"/>
<dbReference type="KEGG" id="lcb:LCABL_29990"/>
<dbReference type="HOGENOM" id="CLU_100552_0_0_9"/>
<dbReference type="GO" id="GO:0005737">
    <property type="term" value="C:cytoplasm"/>
    <property type="evidence" value="ECO:0007669"/>
    <property type="project" value="UniProtKB-SubCell"/>
</dbReference>
<dbReference type="GO" id="GO:0070038">
    <property type="term" value="F:rRNA (pseudouridine-N3-)-methyltransferase activity"/>
    <property type="evidence" value="ECO:0007669"/>
    <property type="project" value="UniProtKB-UniRule"/>
</dbReference>
<dbReference type="CDD" id="cd18081">
    <property type="entry name" value="RlmH-like"/>
    <property type="match status" value="1"/>
</dbReference>
<dbReference type="Gene3D" id="3.40.1280.10">
    <property type="match status" value="1"/>
</dbReference>
<dbReference type="HAMAP" id="MF_00658">
    <property type="entry name" value="23SrRNA_methyltr_H"/>
    <property type="match status" value="1"/>
</dbReference>
<dbReference type="InterPro" id="IPR029028">
    <property type="entry name" value="Alpha/beta_knot_MTases"/>
</dbReference>
<dbReference type="InterPro" id="IPR003742">
    <property type="entry name" value="RlmH-like"/>
</dbReference>
<dbReference type="InterPro" id="IPR029026">
    <property type="entry name" value="tRNA_m1G_MTases_N"/>
</dbReference>
<dbReference type="NCBIfam" id="NF000985">
    <property type="entry name" value="PRK00103.1-3"/>
    <property type="match status" value="1"/>
</dbReference>
<dbReference type="NCBIfam" id="TIGR00246">
    <property type="entry name" value="tRNA_RlmH_YbeA"/>
    <property type="match status" value="1"/>
</dbReference>
<dbReference type="PANTHER" id="PTHR33603">
    <property type="entry name" value="METHYLTRANSFERASE"/>
    <property type="match status" value="1"/>
</dbReference>
<dbReference type="PANTHER" id="PTHR33603:SF1">
    <property type="entry name" value="RIBOSOMAL RNA LARGE SUBUNIT METHYLTRANSFERASE H"/>
    <property type="match status" value="1"/>
</dbReference>
<dbReference type="Pfam" id="PF02590">
    <property type="entry name" value="SPOUT_MTase"/>
    <property type="match status" value="1"/>
</dbReference>
<dbReference type="PIRSF" id="PIRSF004505">
    <property type="entry name" value="MT_bac"/>
    <property type="match status" value="1"/>
</dbReference>
<dbReference type="SUPFAM" id="SSF75217">
    <property type="entry name" value="alpha/beta knot"/>
    <property type="match status" value="1"/>
</dbReference>
<name>RLMH_LACCB</name>
<keyword id="KW-0963">Cytoplasm</keyword>
<keyword id="KW-0489">Methyltransferase</keyword>
<keyword id="KW-0698">rRNA processing</keyword>
<keyword id="KW-0949">S-adenosyl-L-methionine</keyword>
<keyword id="KW-0808">Transferase</keyword>
<protein>
    <recommendedName>
        <fullName evidence="1">Ribosomal RNA large subunit methyltransferase H</fullName>
        <ecNumber evidence="1">2.1.1.177</ecNumber>
    </recommendedName>
    <alternativeName>
        <fullName evidence="1">23S rRNA (pseudouridine1915-N3)-methyltransferase</fullName>
    </alternativeName>
    <alternativeName>
        <fullName evidence="1">23S rRNA m3Psi1915 methyltransferase</fullName>
    </alternativeName>
    <alternativeName>
        <fullName evidence="1">rRNA (pseudouridine-N3-)-methyltransferase RlmH</fullName>
    </alternativeName>
</protein>
<gene>
    <name evidence="1" type="primary">rlmH</name>
    <name type="ordered locus">LCABL_29990</name>
</gene>
<proteinExistence type="inferred from homology"/>
<comment type="function">
    <text evidence="1">Specifically methylates the pseudouridine at position 1915 (m3Psi1915) in 23S rRNA.</text>
</comment>
<comment type="catalytic activity">
    <reaction evidence="1">
        <text>pseudouridine(1915) in 23S rRNA + S-adenosyl-L-methionine = N(3)-methylpseudouridine(1915) in 23S rRNA + S-adenosyl-L-homocysteine + H(+)</text>
        <dbReference type="Rhea" id="RHEA:42752"/>
        <dbReference type="Rhea" id="RHEA-COMP:10221"/>
        <dbReference type="Rhea" id="RHEA-COMP:10222"/>
        <dbReference type="ChEBI" id="CHEBI:15378"/>
        <dbReference type="ChEBI" id="CHEBI:57856"/>
        <dbReference type="ChEBI" id="CHEBI:59789"/>
        <dbReference type="ChEBI" id="CHEBI:65314"/>
        <dbReference type="ChEBI" id="CHEBI:74486"/>
        <dbReference type="EC" id="2.1.1.177"/>
    </reaction>
</comment>
<comment type="subunit">
    <text evidence="1">Homodimer.</text>
</comment>
<comment type="subcellular location">
    <subcellularLocation>
        <location evidence="1">Cytoplasm</location>
    </subcellularLocation>
</comment>
<comment type="similarity">
    <text evidence="1">Belongs to the RNA methyltransferase RlmH family.</text>
</comment>
<organism>
    <name type="scientific">Lacticaseibacillus casei (strain BL23)</name>
    <name type="common">Lactobacillus casei</name>
    <dbReference type="NCBI Taxonomy" id="543734"/>
    <lineage>
        <taxon>Bacteria</taxon>
        <taxon>Bacillati</taxon>
        <taxon>Bacillota</taxon>
        <taxon>Bacilli</taxon>
        <taxon>Lactobacillales</taxon>
        <taxon>Lactobacillaceae</taxon>
        <taxon>Lacticaseibacillus</taxon>
    </lineage>
</organism>
<accession>B3WBI0</accession>
<reference key="1">
    <citation type="submission" date="2008-06" db="EMBL/GenBank/DDBJ databases">
        <title>Lactobacillus casei BL23 complete genome sequence.</title>
        <authorList>
            <person name="Maze A."/>
            <person name="Boel G."/>
            <person name="Bourand A."/>
            <person name="Loux V."/>
            <person name="Gibrat J.F."/>
            <person name="Zuniga M."/>
            <person name="Hartke A."/>
            <person name="Deutscher J."/>
        </authorList>
    </citation>
    <scope>NUCLEOTIDE SEQUENCE [LARGE SCALE GENOMIC DNA]</scope>
    <source>
        <strain>BL23</strain>
    </source>
</reference>